<accession>Q92GL2</accession>
<comment type="function">
    <text evidence="1">Catalyzes the phosphorylation of the 3'-hydroxyl group of dephosphocoenzyme A to form coenzyme A.</text>
</comment>
<comment type="catalytic activity">
    <reaction evidence="1">
        <text>3'-dephospho-CoA + ATP = ADP + CoA + H(+)</text>
        <dbReference type="Rhea" id="RHEA:18245"/>
        <dbReference type="ChEBI" id="CHEBI:15378"/>
        <dbReference type="ChEBI" id="CHEBI:30616"/>
        <dbReference type="ChEBI" id="CHEBI:57287"/>
        <dbReference type="ChEBI" id="CHEBI:57328"/>
        <dbReference type="ChEBI" id="CHEBI:456216"/>
        <dbReference type="EC" id="2.7.1.24"/>
    </reaction>
</comment>
<comment type="pathway">
    <text evidence="1">Cofactor biosynthesis; coenzyme A biosynthesis; CoA from (R)-pantothenate: step 5/5.</text>
</comment>
<comment type="subcellular location">
    <subcellularLocation>
        <location evidence="1">Cytoplasm</location>
    </subcellularLocation>
</comment>
<comment type="similarity">
    <text evidence="1">Belongs to the CoaE family.</text>
</comment>
<organism>
    <name type="scientific">Rickettsia conorii (strain ATCC VR-613 / Malish 7)</name>
    <dbReference type="NCBI Taxonomy" id="272944"/>
    <lineage>
        <taxon>Bacteria</taxon>
        <taxon>Pseudomonadati</taxon>
        <taxon>Pseudomonadota</taxon>
        <taxon>Alphaproteobacteria</taxon>
        <taxon>Rickettsiales</taxon>
        <taxon>Rickettsiaceae</taxon>
        <taxon>Rickettsieae</taxon>
        <taxon>Rickettsia</taxon>
        <taxon>spotted fever group</taxon>
    </lineage>
</organism>
<gene>
    <name evidence="1" type="primary">coaE</name>
    <name type="ordered locus">RC1111</name>
</gene>
<reference key="1">
    <citation type="journal article" date="2001" name="Science">
        <title>Mechanisms of evolution in Rickettsia conorii and R. prowazekii.</title>
        <authorList>
            <person name="Ogata H."/>
            <person name="Audic S."/>
            <person name="Renesto-Audiffren P."/>
            <person name="Fournier P.-E."/>
            <person name="Barbe V."/>
            <person name="Samson D."/>
            <person name="Roux V."/>
            <person name="Cossart P."/>
            <person name="Weissenbach J."/>
            <person name="Claverie J.-M."/>
            <person name="Raoult D."/>
        </authorList>
    </citation>
    <scope>NUCLEOTIDE SEQUENCE [LARGE SCALE GENOMIC DNA]</scope>
    <source>
        <strain>ATCC VR-613 / Malish 7</strain>
    </source>
</reference>
<protein>
    <recommendedName>
        <fullName evidence="1">Dephospho-CoA kinase</fullName>
        <ecNumber evidence="1">2.7.1.24</ecNumber>
    </recommendedName>
    <alternativeName>
        <fullName evidence="1">Dephosphocoenzyme A kinase</fullName>
    </alternativeName>
</protein>
<dbReference type="EC" id="2.7.1.24" evidence="1"/>
<dbReference type="EMBL" id="AE006914">
    <property type="protein sequence ID" value="AAL03649.1"/>
    <property type="molecule type" value="Genomic_DNA"/>
</dbReference>
<dbReference type="PIR" id="G97838">
    <property type="entry name" value="G97838"/>
</dbReference>
<dbReference type="RefSeq" id="WP_010977684.1">
    <property type="nucleotide sequence ID" value="NC_003103.1"/>
</dbReference>
<dbReference type="SMR" id="Q92GL2"/>
<dbReference type="GeneID" id="928255"/>
<dbReference type="KEGG" id="rco:RC1111"/>
<dbReference type="HOGENOM" id="CLU_057180_3_1_5"/>
<dbReference type="UniPathway" id="UPA00241">
    <property type="reaction ID" value="UER00356"/>
</dbReference>
<dbReference type="Proteomes" id="UP000000816">
    <property type="component" value="Chromosome"/>
</dbReference>
<dbReference type="GO" id="GO:0005737">
    <property type="term" value="C:cytoplasm"/>
    <property type="evidence" value="ECO:0007669"/>
    <property type="project" value="UniProtKB-SubCell"/>
</dbReference>
<dbReference type="GO" id="GO:0005524">
    <property type="term" value="F:ATP binding"/>
    <property type="evidence" value="ECO:0007669"/>
    <property type="project" value="UniProtKB-UniRule"/>
</dbReference>
<dbReference type="GO" id="GO:0004140">
    <property type="term" value="F:dephospho-CoA kinase activity"/>
    <property type="evidence" value="ECO:0007669"/>
    <property type="project" value="UniProtKB-UniRule"/>
</dbReference>
<dbReference type="GO" id="GO:0015937">
    <property type="term" value="P:coenzyme A biosynthetic process"/>
    <property type="evidence" value="ECO:0007669"/>
    <property type="project" value="UniProtKB-UniRule"/>
</dbReference>
<dbReference type="CDD" id="cd02022">
    <property type="entry name" value="DPCK"/>
    <property type="match status" value="1"/>
</dbReference>
<dbReference type="Gene3D" id="3.40.50.300">
    <property type="entry name" value="P-loop containing nucleotide triphosphate hydrolases"/>
    <property type="match status" value="1"/>
</dbReference>
<dbReference type="HAMAP" id="MF_00376">
    <property type="entry name" value="Dephospho_CoA_kinase"/>
    <property type="match status" value="1"/>
</dbReference>
<dbReference type="InterPro" id="IPR001977">
    <property type="entry name" value="Depp_CoAkinase"/>
</dbReference>
<dbReference type="InterPro" id="IPR027417">
    <property type="entry name" value="P-loop_NTPase"/>
</dbReference>
<dbReference type="NCBIfam" id="TIGR00152">
    <property type="entry name" value="dephospho-CoA kinase"/>
    <property type="match status" value="1"/>
</dbReference>
<dbReference type="Pfam" id="PF01121">
    <property type="entry name" value="CoaE"/>
    <property type="match status" value="1"/>
</dbReference>
<dbReference type="SUPFAM" id="SSF52540">
    <property type="entry name" value="P-loop containing nucleoside triphosphate hydrolases"/>
    <property type="match status" value="1"/>
</dbReference>
<dbReference type="PROSITE" id="PS51219">
    <property type="entry name" value="DPCK"/>
    <property type="match status" value="1"/>
</dbReference>
<feature type="chain" id="PRO_0000172991" description="Dephospho-CoA kinase">
    <location>
        <begin position="1"/>
        <end position="191"/>
    </location>
</feature>
<feature type="domain" description="DPCK" evidence="1">
    <location>
        <begin position="3"/>
        <end position="191"/>
    </location>
</feature>
<feature type="binding site" evidence="1">
    <location>
        <begin position="11"/>
        <end position="16"/>
    </location>
    <ligand>
        <name>ATP</name>
        <dbReference type="ChEBI" id="CHEBI:30616"/>
    </ligand>
</feature>
<proteinExistence type="inferred from homology"/>
<name>COAE_RICCN</name>
<evidence type="ECO:0000255" key="1">
    <source>
        <dbReference type="HAMAP-Rule" id="MF_00376"/>
    </source>
</evidence>
<sequence length="191" mass="22175">MLAIGITGSYASGKTFMLDYLTEKGYKTFCADRCIKELYQDVVLQTQILKLLPELESFNIRKISNLIYNNDLAREKLQNFIYPLLIDKLILFKKENANSKFGFAEIPLLYEAKFEKYFDFVVTIYCSEAIRMQRAITRSSFDIEIYNKIKEIQLSQESKIAKADFAINSGVDMLDLEKQIAKLIKDLECRV</sequence>
<keyword id="KW-0067">ATP-binding</keyword>
<keyword id="KW-0173">Coenzyme A biosynthesis</keyword>
<keyword id="KW-0963">Cytoplasm</keyword>
<keyword id="KW-0418">Kinase</keyword>
<keyword id="KW-0547">Nucleotide-binding</keyword>
<keyword id="KW-0808">Transferase</keyword>